<keyword id="KW-0472">Membrane</keyword>
<keyword id="KW-1185">Reference proteome</keyword>
<keyword id="KW-0812">Transmembrane</keyword>
<keyword id="KW-1133">Transmembrane helix</keyword>
<accession>P46570</accession>
<feature type="chain" id="PRO_0000104551" description="Serpentine receptor class gamma-1">
    <location>
        <begin position="1"/>
        <end position="288"/>
    </location>
</feature>
<feature type="transmembrane region" description="Helical" evidence="1">
    <location>
        <begin position="25"/>
        <end position="45"/>
    </location>
</feature>
<feature type="transmembrane region" description="Helical" evidence="1">
    <location>
        <begin position="59"/>
        <end position="79"/>
    </location>
</feature>
<feature type="transmembrane region" description="Helical" evidence="1">
    <location>
        <begin position="118"/>
        <end position="138"/>
    </location>
</feature>
<feature type="transmembrane region" description="Helical" evidence="1">
    <location>
        <begin position="148"/>
        <end position="168"/>
    </location>
</feature>
<feature type="transmembrane region" description="Helical" evidence="1">
    <location>
        <begin position="197"/>
        <end position="217"/>
    </location>
</feature>
<feature type="transmembrane region" description="Helical" evidence="1">
    <location>
        <begin position="238"/>
        <end position="258"/>
    </location>
</feature>
<feature type="transmembrane region" description="Helical" evidence="1">
    <location>
        <begin position="268"/>
        <end position="288"/>
    </location>
</feature>
<proteinExistence type="inferred from homology"/>
<sequence length="288" mass="33842">MPINETASVTNCDTNFEPLIENLKLFLQLCYLTPSALFLSRVIYITAWKYRKKFRKQRFYTIFLADCVTGFILVNFSIFFTRPLIYVPQACEFVLEHIKKLALFLDIYYPCFRYLQAFQILVQILFVANRASCVLWPLSYSLFWKKWLKSILTTMAISPCLWIWTIAISDKMIVHGYGGLVVLYYRYVSWARSTLFFSILRLTSVITIVVATTTMLIKMSRMKKRIRESERRLCWASVYLSVCYLLPAIAEFEYFLVLKAKLFENSGILHGLVVICWDIQNICSTYVM</sequence>
<comment type="subcellular location">
    <subcellularLocation>
        <location evidence="2">Membrane</location>
        <topology evidence="2">Multi-pass membrane protein</topology>
    </subcellularLocation>
</comment>
<comment type="similarity">
    <text evidence="2">Belongs to the nematode receptor-like protein srg family.</text>
</comment>
<organism>
    <name type="scientific">Caenorhabditis elegans</name>
    <dbReference type="NCBI Taxonomy" id="6239"/>
    <lineage>
        <taxon>Eukaryota</taxon>
        <taxon>Metazoa</taxon>
        <taxon>Ecdysozoa</taxon>
        <taxon>Nematoda</taxon>
        <taxon>Chromadorea</taxon>
        <taxon>Rhabditida</taxon>
        <taxon>Rhabditina</taxon>
        <taxon>Rhabditomorpha</taxon>
        <taxon>Rhabditoidea</taxon>
        <taxon>Rhabditidae</taxon>
        <taxon>Peloderinae</taxon>
        <taxon>Caenorhabditis</taxon>
    </lineage>
</organism>
<name>SRG1_CAEEL</name>
<protein>
    <recommendedName>
        <fullName>Serpentine receptor class gamma-1</fullName>
        <shortName>Protein srg-1</shortName>
    </recommendedName>
</protein>
<evidence type="ECO:0000255" key="1"/>
<evidence type="ECO:0000305" key="2"/>
<dbReference type="EMBL" id="FO080617">
    <property type="protein sequence ID" value="CCD65208.1"/>
    <property type="molecule type" value="Genomic_DNA"/>
</dbReference>
<dbReference type="PIR" id="T15555">
    <property type="entry name" value="T15555"/>
</dbReference>
<dbReference type="RefSeq" id="NP_498366.2">
    <property type="nucleotide sequence ID" value="NM_065965.2"/>
</dbReference>
<dbReference type="SMR" id="P46570"/>
<dbReference type="FunCoup" id="P46570">
    <property type="interactions" value="1"/>
</dbReference>
<dbReference type="PaxDb" id="6239-C18F10.4"/>
<dbReference type="EnsemblMetazoa" id="C18F10.4.1">
    <property type="protein sequence ID" value="C18F10.4.1"/>
    <property type="gene ID" value="WBGene00005159"/>
</dbReference>
<dbReference type="GeneID" id="191828"/>
<dbReference type="KEGG" id="cel:CELE_C18F10.4"/>
<dbReference type="UCSC" id="C18F10.4">
    <property type="organism name" value="c. elegans"/>
</dbReference>
<dbReference type="AGR" id="WB:WBGene00005159"/>
<dbReference type="CTD" id="191828"/>
<dbReference type="WormBase" id="C18F10.4">
    <property type="protein sequence ID" value="CE33270"/>
    <property type="gene ID" value="WBGene00005159"/>
    <property type="gene designation" value="srg-1"/>
</dbReference>
<dbReference type="eggNOG" id="ENOG502TJEX">
    <property type="taxonomic scope" value="Eukaryota"/>
</dbReference>
<dbReference type="GeneTree" id="ENSGT00970000195841"/>
<dbReference type="HOGENOM" id="CLU_061253_1_1_1"/>
<dbReference type="InParanoid" id="P46570"/>
<dbReference type="OMA" id="CWASVYL"/>
<dbReference type="OrthoDB" id="10378669at2759"/>
<dbReference type="PhylomeDB" id="P46570"/>
<dbReference type="PRO" id="PR:P46570"/>
<dbReference type="Proteomes" id="UP000001940">
    <property type="component" value="Chromosome III"/>
</dbReference>
<dbReference type="GO" id="GO:0016020">
    <property type="term" value="C:membrane"/>
    <property type="evidence" value="ECO:0007669"/>
    <property type="project" value="UniProtKB-SubCell"/>
</dbReference>
<dbReference type="GO" id="GO:0004888">
    <property type="term" value="F:transmembrane signaling receptor activity"/>
    <property type="evidence" value="ECO:0007669"/>
    <property type="project" value="InterPro"/>
</dbReference>
<dbReference type="GO" id="GO:0007606">
    <property type="term" value="P:sensory perception of chemical stimulus"/>
    <property type="evidence" value="ECO:0007669"/>
    <property type="project" value="InterPro"/>
</dbReference>
<dbReference type="InterPro" id="IPR000609">
    <property type="entry name" value="7TM_GPCR_serpentine_rcpt_Srg"/>
</dbReference>
<dbReference type="InterPro" id="IPR051119">
    <property type="entry name" value="Nematode_SR-like"/>
</dbReference>
<dbReference type="PANTHER" id="PTHR31627:SF13">
    <property type="entry name" value="SERPENTINE RECEPTOR CLASS GAMMA-1-RELATED"/>
    <property type="match status" value="1"/>
</dbReference>
<dbReference type="PANTHER" id="PTHR31627">
    <property type="entry name" value="SERPENTINE RECEPTOR CLASS GAMMA-RELATED"/>
    <property type="match status" value="1"/>
</dbReference>
<dbReference type="Pfam" id="PF02118">
    <property type="entry name" value="Srg"/>
    <property type="match status" value="1"/>
</dbReference>
<dbReference type="PRINTS" id="PR00698">
    <property type="entry name" value="TMPROTEINSRG"/>
</dbReference>
<gene>
    <name type="primary">srg-1</name>
    <name type="ORF">C18F10.4</name>
</gene>
<reference key="1">
    <citation type="journal article" date="1998" name="Science">
        <title>Genome sequence of the nematode C. elegans: a platform for investigating biology.</title>
        <authorList>
            <consortium name="The C. elegans sequencing consortium"/>
        </authorList>
    </citation>
    <scope>NUCLEOTIDE SEQUENCE [LARGE SCALE GENOMIC DNA]</scope>
    <source>
        <strain>Bristol N2</strain>
    </source>
</reference>